<gene>
    <name evidence="1" type="primary">rps12</name>
    <name type="ordered locus">MmarC7_0612</name>
</gene>
<evidence type="ECO:0000255" key="1">
    <source>
        <dbReference type="HAMAP-Rule" id="MF_00403"/>
    </source>
</evidence>
<evidence type="ECO:0000305" key="2"/>
<comment type="function">
    <text evidence="1">With S4 and S5 plays an important role in translational accuracy. Located at the interface of the 30S and 50S subunits.</text>
</comment>
<comment type="subunit">
    <text evidence="1">Part of the 30S ribosomal subunit.</text>
</comment>
<comment type="similarity">
    <text evidence="1">Belongs to the universal ribosomal protein uS12 family.</text>
</comment>
<organism>
    <name type="scientific">Methanococcus maripaludis (strain C7 / ATCC BAA-1331)</name>
    <dbReference type="NCBI Taxonomy" id="426368"/>
    <lineage>
        <taxon>Archaea</taxon>
        <taxon>Methanobacteriati</taxon>
        <taxon>Methanobacteriota</taxon>
        <taxon>Methanomada group</taxon>
        <taxon>Methanococci</taxon>
        <taxon>Methanococcales</taxon>
        <taxon>Methanococcaceae</taxon>
        <taxon>Methanococcus</taxon>
    </lineage>
</organism>
<feature type="chain" id="PRO_1000049794" description="Small ribosomal subunit protein uS12">
    <location>
        <begin position="1"/>
        <end position="147"/>
    </location>
</feature>
<sequence>MAGSKSPKGEFAGRKLLLKRRASRWHHYKYVNKALSLKLKADPLEGAPMGRGIVVEKVGLEAKQPNSAIRKCVRVQLIKNGRQVTAFAPGNHAINFIDEHDEVVIEGIGGPSGQAKGDIPGVRYKVVMVGKNSIRELVRGRQEKVKR</sequence>
<keyword id="KW-0687">Ribonucleoprotein</keyword>
<keyword id="KW-0689">Ribosomal protein</keyword>
<keyword id="KW-0694">RNA-binding</keyword>
<keyword id="KW-0699">rRNA-binding</keyword>
<accession>A6VGV3</accession>
<protein>
    <recommendedName>
        <fullName evidence="1">Small ribosomal subunit protein uS12</fullName>
    </recommendedName>
    <alternativeName>
        <fullName evidence="2">30S ribosomal protein S12</fullName>
    </alternativeName>
</protein>
<name>RS12_METM7</name>
<proteinExistence type="inferred from homology"/>
<dbReference type="EMBL" id="CP000745">
    <property type="protein sequence ID" value="ABR65679.1"/>
    <property type="molecule type" value="Genomic_DNA"/>
</dbReference>
<dbReference type="SMR" id="A6VGV3"/>
<dbReference type="STRING" id="426368.MmarC7_0612"/>
<dbReference type="KEGG" id="mmz:MmarC7_0612"/>
<dbReference type="eggNOG" id="arCOG04255">
    <property type="taxonomic scope" value="Archaea"/>
</dbReference>
<dbReference type="HOGENOM" id="CLU_115574_0_1_2"/>
<dbReference type="OrthoDB" id="45154at2157"/>
<dbReference type="GO" id="GO:0015935">
    <property type="term" value="C:small ribosomal subunit"/>
    <property type="evidence" value="ECO:0007669"/>
    <property type="project" value="InterPro"/>
</dbReference>
<dbReference type="GO" id="GO:0019843">
    <property type="term" value="F:rRNA binding"/>
    <property type="evidence" value="ECO:0007669"/>
    <property type="project" value="UniProtKB-UniRule"/>
</dbReference>
<dbReference type="GO" id="GO:0003735">
    <property type="term" value="F:structural constituent of ribosome"/>
    <property type="evidence" value="ECO:0007669"/>
    <property type="project" value="InterPro"/>
</dbReference>
<dbReference type="GO" id="GO:0006412">
    <property type="term" value="P:translation"/>
    <property type="evidence" value="ECO:0007669"/>
    <property type="project" value="UniProtKB-UniRule"/>
</dbReference>
<dbReference type="CDD" id="cd03367">
    <property type="entry name" value="Ribosomal_S23"/>
    <property type="match status" value="1"/>
</dbReference>
<dbReference type="FunFam" id="2.40.50.140:FF:000007">
    <property type="entry name" value="40S ribosomal protein S23"/>
    <property type="match status" value="1"/>
</dbReference>
<dbReference type="Gene3D" id="2.40.50.140">
    <property type="entry name" value="Nucleic acid-binding proteins"/>
    <property type="match status" value="1"/>
</dbReference>
<dbReference type="HAMAP" id="MF_00403_A">
    <property type="entry name" value="Ribosomal_uS12_A"/>
    <property type="match status" value="1"/>
</dbReference>
<dbReference type="InterPro" id="IPR012340">
    <property type="entry name" value="NA-bd_OB-fold"/>
</dbReference>
<dbReference type="InterPro" id="IPR006032">
    <property type="entry name" value="Ribosomal_uS12"/>
</dbReference>
<dbReference type="InterPro" id="IPR022863">
    <property type="entry name" value="Ribosomal_uS12_arc"/>
</dbReference>
<dbReference type="InterPro" id="IPR005680">
    <property type="entry name" value="Ribosomal_uS12_euk/arc"/>
</dbReference>
<dbReference type="NCBIfam" id="NF003254">
    <property type="entry name" value="PRK04211.1"/>
    <property type="match status" value="1"/>
</dbReference>
<dbReference type="NCBIfam" id="TIGR00982">
    <property type="entry name" value="uS12_E_A"/>
    <property type="match status" value="1"/>
</dbReference>
<dbReference type="PANTHER" id="PTHR11652">
    <property type="entry name" value="30S RIBOSOMAL PROTEIN S12 FAMILY MEMBER"/>
    <property type="match status" value="1"/>
</dbReference>
<dbReference type="Pfam" id="PF00164">
    <property type="entry name" value="Ribosom_S12_S23"/>
    <property type="match status" value="1"/>
</dbReference>
<dbReference type="PIRSF" id="PIRSF002133">
    <property type="entry name" value="Ribosomal_S12/S23"/>
    <property type="match status" value="1"/>
</dbReference>
<dbReference type="SUPFAM" id="SSF50249">
    <property type="entry name" value="Nucleic acid-binding proteins"/>
    <property type="match status" value="1"/>
</dbReference>
<dbReference type="PROSITE" id="PS00055">
    <property type="entry name" value="RIBOSOMAL_S12"/>
    <property type="match status" value="1"/>
</dbReference>
<reference key="1">
    <citation type="submission" date="2007-06" db="EMBL/GenBank/DDBJ databases">
        <title>Complete sequence of Methanococcus maripaludis C7.</title>
        <authorList>
            <consortium name="US DOE Joint Genome Institute"/>
            <person name="Copeland A."/>
            <person name="Lucas S."/>
            <person name="Lapidus A."/>
            <person name="Barry K."/>
            <person name="Glavina del Rio T."/>
            <person name="Dalin E."/>
            <person name="Tice H."/>
            <person name="Pitluck S."/>
            <person name="Clum A."/>
            <person name="Schmutz J."/>
            <person name="Larimer F."/>
            <person name="Land M."/>
            <person name="Hauser L."/>
            <person name="Kyrpides N."/>
            <person name="Anderson I."/>
            <person name="Sieprawska-Lupa M."/>
            <person name="Whitman W.B."/>
            <person name="Richardson P."/>
        </authorList>
    </citation>
    <scope>NUCLEOTIDE SEQUENCE [LARGE SCALE GENOMIC DNA]</scope>
    <source>
        <strain>C7 / ATCC BAA-1331</strain>
    </source>
</reference>